<evidence type="ECO:0000255" key="1">
    <source>
        <dbReference type="HAMAP-Rule" id="MF_00219"/>
    </source>
</evidence>
<keyword id="KW-0378">Hydrolase</keyword>
<keyword id="KW-0479">Metal-binding</keyword>
<keyword id="KW-0665">Pyrimidine biosynthesis</keyword>
<keyword id="KW-1185">Reference proteome</keyword>
<keyword id="KW-0862">Zinc</keyword>
<sequence>MTDSLTLLRPDDWHIHLRDGTALETTVPHAAASFARAIIMPNLVPPVTNAEEALAYRARIEAQIPAETPFEPLMVLYLTNNTTPETIAAAKAAGVVACKLYPAGATTNSASGVTDIQHIYPALEEMERQGVLLLLHGEVTDSAIDIFDREAVFIERTLRKVVADFPKLKIVLEHITTQQAAEFVAQAPDNVAATITAHHLLYNRNHMLAGGIRPHYYCLPILKRQTHQQALVAAATSGSPKFFLGTDSAPHAKSRKEAACGCAGSYTAFAAIELYAEAFEDAGALDRLEGFASHFGPDFYGLPRNSDTITLRREPWSVPDTLTFGDESLVPVKAGETLNWRVQK</sequence>
<accession>C5BNK6</accession>
<comment type="function">
    <text evidence="1">Catalyzes the reversible cyclization of carbamoyl aspartate to dihydroorotate.</text>
</comment>
<comment type="catalytic activity">
    <reaction evidence="1">
        <text>(S)-dihydroorotate + H2O = N-carbamoyl-L-aspartate + H(+)</text>
        <dbReference type="Rhea" id="RHEA:24296"/>
        <dbReference type="ChEBI" id="CHEBI:15377"/>
        <dbReference type="ChEBI" id="CHEBI:15378"/>
        <dbReference type="ChEBI" id="CHEBI:30864"/>
        <dbReference type="ChEBI" id="CHEBI:32814"/>
        <dbReference type="EC" id="3.5.2.3"/>
    </reaction>
</comment>
<comment type="cofactor">
    <cofactor evidence="1">
        <name>Zn(2+)</name>
        <dbReference type="ChEBI" id="CHEBI:29105"/>
    </cofactor>
    <text evidence="1">Binds 2 Zn(2+) ions per subunit.</text>
</comment>
<comment type="pathway">
    <text evidence="1">Pyrimidine metabolism; UMP biosynthesis via de novo pathway; (S)-dihydroorotate from bicarbonate: step 3/3.</text>
</comment>
<comment type="subunit">
    <text evidence="1">Homodimer.</text>
</comment>
<comment type="similarity">
    <text evidence="1">Belongs to the metallo-dependent hydrolases superfamily. DHOase family. Class II DHOase subfamily.</text>
</comment>
<reference key="1">
    <citation type="journal article" date="2009" name="PLoS ONE">
        <title>The complete genome of Teredinibacter turnerae T7901: an intracellular endosymbiont of marine wood-boring bivalves (shipworms).</title>
        <authorList>
            <person name="Yang J.C."/>
            <person name="Madupu R."/>
            <person name="Durkin A.S."/>
            <person name="Ekborg N.A."/>
            <person name="Pedamallu C.S."/>
            <person name="Hostetler J.B."/>
            <person name="Radune D."/>
            <person name="Toms B.S."/>
            <person name="Henrissat B."/>
            <person name="Coutinho P.M."/>
            <person name="Schwarz S."/>
            <person name="Field L."/>
            <person name="Trindade-Silva A.E."/>
            <person name="Soares C.A.G."/>
            <person name="Elshahawi S."/>
            <person name="Hanora A."/>
            <person name="Schmidt E.W."/>
            <person name="Haygood M.G."/>
            <person name="Posfai J."/>
            <person name="Benner J."/>
            <person name="Madinger C."/>
            <person name="Nove J."/>
            <person name="Anton B."/>
            <person name="Chaudhary K."/>
            <person name="Foster J."/>
            <person name="Holman A."/>
            <person name="Kumar S."/>
            <person name="Lessard P.A."/>
            <person name="Luyten Y.A."/>
            <person name="Slatko B."/>
            <person name="Wood N."/>
            <person name="Wu B."/>
            <person name="Teplitski M."/>
            <person name="Mougous J.D."/>
            <person name="Ward N."/>
            <person name="Eisen J.A."/>
            <person name="Badger J.H."/>
            <person name="Distel D.L."/>
        </authorList>
    </citation>
    <scope>NUCLEOTIDE SEQUENCE [LARGE SCALE GENOMIC DNA]</scope>
    <source>
        <strain>ATCC 39867 / T7901</strain>
    </source>
</reference>
<feature type="chain" id="PRO_1000204249" description="Dihydroorotase">
    <location>
        <begin position="1"/>
        <end position="344"/>
    </location>
</feature>
<feature type="active site" evidence="1">
    <location>
        <position position="247"/>
    </location>
</feature>
<feature type="binding site" evidence="1">
    <location>
        <position position="14"/>
    </location>
    <ligand>
        <name>Zn(2+)</name>
        <dbReference type="ChEBI" id="CHEBI:29105"/>
        <label>1</label>
    </ligand>
</feature>
<feature type="binding site" evidence="1">
    <location>
        <begin position="16"/>
        <end position="18"/>
    </location>
    <ligand>
        <name>substrate</name>
    </ligand>
</feature>
<feature type="binding site" evidence="1">
    <location>
        <position position="16"/>
    </location>
    <ligand>
        <name>Zn(2+)</name>
        <dbReference type="ChEBI" id="CHEBI:29105"/>
        <label>1</label>
    </ligand>
</feature>
<feature type="binding site" evidence="1">
    <location>
        <position position="42"/>
    </location>
    <ligand>
        <name>substrate</name>
    </ligand>
</feature>
<feature type="binding site" description="via carbamate group" evidence="1">
    <location>
        <position position="99"/>
    </location>
    <ligand>
        <name>Zn(2+)</name>
        <dbReference type="ChEBI" id="CHEBI:29105"/>
        <label>1</label>
    </ligand>
</feature>
<feature type="binding site" description="via carbamate group" evidence="1">
    <location>
        <position position="99"/>
    </location>
    <ligand>
        <name>Zn(2+)</name>
        <dbReference type="ChEBI" id="CHEBI:29105"/>
        <label>2</label>
    </ligand>
</feature>
<feature type="binding site" evidence="1">
    <location>
        <position position="136"/>
    </location>
    <ligand>
        <name>substrate</name>
    </ligand>
</feature>
<feature type="binding site" evidence="1">
    <location>
        <position position="136"/>
    </location>
    <ligand>
        <name>Zn(2+)</name>
        <dbReference type="ChEBI" id="CHEBI:29105"/>
        <label>2</label>
    </ligand>
</feature>
<feature type="binding site" evidence="1">
    <location>
        <position position="174"/>
    </location>
    <ligand>
        <name>Zn(2+)</name>
        <dbReference type="ChEBI" id="CHEBI:29105"/>
        <label>2</label>
    </ligand>
</feature>
<feature type="binding site" evidence="1">
    <location>
        <position position="219"/>
    </location>
    <ligand>
        <name>substrate</name>
    </ligand>
</feature>
<feature type="binding site" evidence="1">
    <location>
        <position position="247"/>
    </location>
    <ligand>
        <name>Zn(2+)</name>
        <dbReference type="ChEBI" id="CHEBI:29105"/>
        <label>1</label>
    </ligand>
</feature>
<feature type="binding site" evidence="1">
    <location>
        <position position="251"/>
    </location>
    <ligand>
        <name>substrate</name>
    </ligand>
</feature>
<feature type="binding site" evidence="1">
    <location>
        <position position="263"/>
    </location>
    <ligand>
        <name>substrate</name>
    </ligand>
</feature>
<feature type="modified residue" description="N6-carboxylysine" evidence="1">
    <location>
        <position position="99"/>
    </location>
</feature>
<gene>
    <name evidence="1" type="primary">pyrC</name>
    <name type="ordered locus">TERTU_3002</name>
</gene>
<dbReference type="EC" id="3.5.2.3" evidence="1"/>
<dbReference type="EMBL" id="CP001614">
    <property type="protein sequence ID" value="ACR13985.1"/>
    <property type="molecule type" value="Genomic_DNA"/>
</dbReference>
<dbReference type="RefSeq" id="WP_015820100.1">
    <property type="nucleotide sequence ID" value="NC_012997.1"/>
</dbReference>
<dbReference type="SMR" id="C5BNK6"/>
<dbReference type="STRING" id="377629.TERTU_3002"/>
<dbReference type="KEGG" id="ttu:TERTU_3002"/>
<dbReference type="eggNOG" id="COG0418">
    <property type="taxonomic scope" value="Bacteria"/>
</dbReference>
<dbReference type="HOGENOM" id="CLU_041558_1_0_6"/>
<dbReference type="OrthoDB" id="9808095at2"/>
<dbReference type="UniPathway" id="UPA00070">
    <property type="reaction ID" value="UER00117"/>
</dbReference>
<dbReference type="Proteomes" id="UP000009080">
    <property type="component" value="Chromosome"/>
</dbReference>
<dbReference type="GO" id="GO:0005829">
    <property type="term" value="C:cytosol"/>
    <property type="evidence" value="ECO:0007669"/>
    <property type="project" value="TreeGrafter"/>
</dbReference>
<dbReference type="GO" id="GO:0004151">
    <property type="term" value="F:dihydroorotase activity"/>
    <property type="evidence" value="ECO:0007669"/>
    <property type="project" value="UniProtKB-UniRule"/>
</dbReference>
<dbReference type="GO" id="GO:0008270">
    <property type="term" value="F:zinc ion binding"/>
    <property type="evidence" value="ECO:0007669"/>
    <property type="project" value="UniProtKB-UniRule"/>
</dbReference>
<dbReference type="GO" id="GO:0006207">
    <property type="term" value="P:'de novo' pyrimidine nucleobase biosynthetic process"/>
    <property type="evidence" value="ECO:0007669"/>
    <property type="project" value="TreeGrafter"/>
</dbReference>
<dbReference type="GO" id="GO:0044205">
    <property type="term" value="P:'de novo' UMP biosynthetic process"/>
    <property type="evidence" value="ECO:0007669"/>
    <property type="project" value="UniProtKB-UniRule"/>
</dbReference>
<dbReference type="CDD" id="cd01294">
    <property type="entry name" value="DHOase"/>
    <property type="match status" value="1"/>
</dbReference>
<dbReference type="FunFam" id="3.20.20.140:FF:000006">
    <property type="entry name" value="Dihydroorotase"/>
    <property type="match status" value="1"/>
</dbReference>
<dbReference type="Gene3D" id="3.20.20.140">
    <property type="entry name" value="Metal-dependent hydrolases"/>
    <property type="match status" value="1"/>
</dbReference>
<dbReference type="HAMAP" id="MF_00219">
    <property type="entry name" value="PyrC_classII"/>
    <property type="match status" value="1"/>
</dbReference>
<dbReference type="InterPro" id="IPR006680">
    <property type="entry name" value="Amidohydro-rel"/>
</dbReference>
<dbReference type="InterPro" id="IPR004721">
    <property type="entry name" value="DHOdimr"/>
</dbReference>
<dbReference type="InterPro" id="IPR002195">
    <property type="entry name" value="Dihydroorotase_CS"/>
</dbReference>
<dbReference type="InterPro" id="IPR032466">
    <property type="entry name" value="Metal_Hydrolase"/>
</dbReference>
<dbReference type="NCBIfam" id="TIGR00856">
    <property type="entry name" value="pyrC_dimer"/>
    <property type="match status" value="1"/>
</dbReference>
<dbReference type="PANTHER" id="PTHR43137">
    <property type="entry name" value="DIHYDROOROTASE"/>
    <property type="match status" value="1"/>
</dbReference>
<dbReference type="PANTHER" id="PTHR43137:SF1">
    <property type="entry name" value="DIHYDROOROTASE"/>
    <property type="match status" value="1"/>
</dbReference>
<dbReference type="Pfam" id="PF01979">
    <property type="entry name" value="Amidohydro_1"/>
    <property type="match status" value="1"/>
</dbReference>
<dbReference type="PIRSF" id="PIRSF001237">
    <property type="entry name" value="DHOdimr"/>
    <property type="match status" value="1"/>
</dbReference>
<dbReference type="SUPFAM" id="SSF51556">
    <property type="entry name" value="Metallo-dependent hydrolases"/>
    <property type="match status" value="1"/>
</dbReference>
<dbReference type="PROSITE" id="PS00482">
    <property type="entry name" value="DIHYDROOROTASE_1"/>
    <property type="match status" value="1"/>
</dbReference>
<dbReference type="PROSITE" id="PS00483">
    <property type="entry name" value="DIHYDROOROTASE_2"/>
    <property type="match status" value="1"/>
</dbReference>
<organism>
    <name type="scientific">Teredinibacter turnerae (strain ATCC 39867 / T7901)</name>
    <dbReference type="NCBI Taxonomy" id="377629"/>
    <lineage>
        <taxon>Bacteria</taxon>
        <taxon>Pseudomonadati</taxon>
        <taxon>Pseudomonadota</taxon>
        <taxon>Gammaproteobacteria</taxon>
        <taxon>Cellvibrionales</taxon>
        <taxon>Cellvibrionaceae</taxon>
        <taxon>Teredinibacter</taxon>
    </lineage>
</organism>
<name>PYRC_TERTT</name>
<proteinExistence type="inferred from homology"/>
<protein>
    <recommendedName>
        <fullName evidence="1">Dihydroorotase</fullName>
        <shortName evidence="1">DHOase</shortName>
        <ecNumber evidence="1">3.5.2.3</ecNumber>
    </recommendedName>
</protein>